<proteinExistence type="inferred from homology"/>
<keyword id="KW-0997">Cell inner membrane</keyword>
<keyword id="KW-1003">Cell membrane</keyword>
<keyword id="KW-0472">Membrane</keyword>
<keyword id="KW-1185">Reference proteome</keyword>
<keyword id="KW-0812">Transmembrane</keyword>
<keyword id="KW-1133">Transmembrane helix</keyword>
<comment type="subcellular location">
    <subcellularLocation>
        <location evidence="2">Cell inner membrane</location>
        <topology evidence="2">Multi-pass membrane protein</topology>
    </subcellularLocation>
</comment>
<comment type="similarity">
    <text evidence="2">Belongs to the UPF0410 family.</text>
</comment>
<accession>P76011</accession>
<gene>
    <name type="primary">ymgE</name>
    <name type="synonym">tag</name>
    <name type="ordered locus">b1195</name>
    <name type="ordered locus">JW1184</name>
</gene>
<organism>
    <name type="scientific">Escherichia coli (strain K12)</name>
    <dbReference type="NCBI Taxonomy" id="83333"/>
    <lineage>
        <taxon>Bacteria</taxon>
        <taxon>Pseudomonadati</taxon>
        <taxon>Pseudomonadota</taxon>
        <taxon>Gammaproteobacteria</taxon>
        <taxon>Enterobacterales</taxon>
        <taxon>Enterobacteriaceae</taxon>
        <taxon>Escherichia</taxon>
    </lineage>
</organism>
<name>YMGE_ECOLI</name>
<reference key="1">
    <citation type="journal article" date="1996" name="DNA Res.">
        <title>A 718-kb DNA sequence of the Escherichia coli K-12 genome corresponding to the 12.7-28.0 min region on the linkage map.</title>
        <authorList>
            <person name="Oshima T."/>
            <person name="Aiba H."/>
            <person name="Baba T."/>
            <person name="Fujita K."/>
            <person name="Hayashi K."/>
            <person name="Honjo A."/>
            <person name="Ikemoto K."/>
            <person name="Inada T."/>
            <person name="Itoh T."/>
            <person name="Kajihara M."/>
            <person name="Kanai K."/>
            <person name="Kashimoto K."/>
            <person name="Kimura S."/>
            <person name="Kitagawa M."/>
            <person name="Makino K."/>
            <person name="Masuda S."/>
            <person name="Miki T."/>
            <person name="Mizobuchi K."/>
            <person name="Mori H."/>
            <person name="Motomura K."/>
            <person name="Nakamura Y."/>
            <person name="Nashimoto H."/>
            <person name="Nishio Y."/>
            <person name="Saito N."/>
            <person name="Sampei G."/>
            <person name="Seki Y."/>
            <person name="Tagami H."/>
            <person name="Takemoto K."/>
            <person name="Wada C."/>
            <person name="Yamamoto Y."/>
            <person name="Yano M."/>
            <person name="Horiuchi T."/>
        </authorList>
    </citation>
    <scope>NUCLEOTIDE SEQUENCE [LARGE SCALE GENOMIC DNA]</scope>
    <source>
        <strain>K12 / W3110 / ATCC 27325 / DSM 5911</strain>
    </source>
</reference>
<reference key="2">
    <citation type="journal article" date="1997" name="Science">
        <title>The complete genome sequence of Escherichia coli K-12.</title>
        <authorList>
            <person name="Blattner F.R."/>
            <person name="Plunkett G. III"/>
            <person name="Bloch C.A."/>
            <person name="Perna N.T."/>
            <person name="Burland V."/>
            <person name="Riley M."/>
            <person name="Collado-Vides J."/>
            <person name="Glasner J.D."/>
            <person name="Rode C.K."/>
            <person name="Mayhew G.F."/>
            <person name="Gregor J."/>
            <person name="Davis N.W."/>
            <person name="Kirkpatrick H.A."/>
            <person name="Goeden M.A."/>
            <person name="Rose D.J."/>
            <person name="Mau B."/>
            <person name="Shao Y."/>
        </authorList>
    </citation>
    <scope>NUCLEOTIDE SEQUENCE [LARGE SCALE GENOMIC DNA]</scope>
    <source>
        <strain>K12 / MG1655 / ATCC 47076</strain>
    </source>
</reference>
<reference key="3">
    <citation type="journal article" date="2006" name="Mol. Syst. Biol.">
        <title>Highly accurate genome sequences of Escherichia coli K-12 strains MG1655 and W3110.</title>
        <authorList>
            <person name="Hayashi K."/>
            <person name="Morooka N."/>
            <person name="Yamamoto Y."/>
            <person name="Fujita K."/>
            <person name="Isono K."/>
            <person name="Choi S."/>
            <person name="Ohtsubo E."/>
            <person name="Baba T."/>
            <person name="Wanner B.L."/>
            <person name="Mori H."/>
            <person name="Horiuchi T."/>
        </authorList>
    </citation>
    <scope>NUCLEOTIDE SEQUENCE [LARGE SCALE GENOMIC DNA]</scope>
    <source>
        <strain>K12 / W3110 / ATCC 27325 / DSM 5911</strain>
    </source>
</reference>
<protein>
    <recommendedName>
        <fullName>UPF0410 protein YmgE</fullName>
    </recommendedName>
    <alternativeName>
        <fullName>Transglycosylase-associated gene protein</fullName>
    </alternativeName>
</protein>
<evidence type="ECO:0000255" key="1"/>
<evidence type="ECO:0000305" key="2"/>
<dbReference type="EMBL" id="U00096">
    <property type="protein sequence ID" value="AAC74279.1"/>
    <property type="molecule type" value="Genomic_DNA"/>
</dbReference>
<dbReference type="EMBL" id="AP009048">
    <property type="protein sequence ID" value="BAA36053.1"/>
    <property type="molecule type" value="Genomic_DNA"/>
</dbReference>
<dbReference type="PIR" id="H64865">
    <property type="entry name" value="H64865"/>
</dbReference>
<dbReference type="RefSeq" id="NP_415713.1">
    <property type="nucleotide sequence ID" value="NC_000913.3"/>
</dbReference>
<dbReference type="RefSeq" id="WP_001310727.1">
    <property type="nucleotide sequence ID" value="NZ_SSZK01000010.1"/>
</dbReference>
<dbReference type="SMR" id="P76011"/>
<dbReference type="BioGRID" id="4262916">
    <property type="interactions" value="114"/>
</dbReference>
<dbReference type="FunCoup" id="P76011">
    <property type="interactions" value="70"/>
</dbReference>
<dbReference type="STRING" id="511145.b1195"/>
<dbReference type="PaxDb" id="511145-b1195"/>
<dbReference type="EnsemblBacteria" id="AAC74279">
    <property type="protein sequence ID" value="AAC74279"/>
    <property type="gene ID" value="b1195"/>
</dbReference>
<dbReference type="GeneID" id="945760"/>
<dbReference type="KEGG" id="ecj:JW1184"/>
<dbReference type="KEGG" id="eco:b1195"/>
<dbReference type="KEGG" id="ecoc:C3026_07030"/>
<dbReference type="PATRIC" id="fig|1411691.4.peg.1091"/>
<dbReference type="EchoBASE" id="EB4084"/>
<dbReference type="eggNOG" id="COG2261">
    <property type="taxonomic scope" value="Bacteria"/>
</dbReference>
<dbReference type="HOGENOM" id="CLU_160040_2_3_6"/>
<dbReference type="InParanoid" id="P76011"/>
<dbReference type="OMA" id="VIWTIII"/>
<dbReference type="OrthoDB" id="9811343at2"/>
<dbReference type="PhylomeDB" id="P76011"/>
<dbReference type="BioCyc" id="EcoCyc:G6624-MONOMER"/>
<dbReference type="PRO" id="PR:P76011"/>
<dbReference type="Proteomes" id="UP000000625">
    <property type="component" value="Chromosome"/>
</dbReference>
<dbReference type="GO" id="GO:0005886">
    <property type="term" value="C:plasma membrane"/>
    <property type="evidence" value="ECO:0007669"/>
    <property type="project" value="UniProtKB-SubCell"/>
</dbReference>
<dbReference type="InterPro" id="IPR007341">
    <property type="entry name" value="Transgly_assoc"/>
</dbReference>
<dbReference type="PANTHER" id="PTHR33884">
    <property type="entry name" value="UPF0410 PROTEIN YMGE"/>
    <property type="match status" value="1"/>
</dbReference>
<dbReference type="PANTHER" id="PTHR33884:SF3">
    <property type="entry name" value="UPF0410 PROTEIN YMGE"/>
    <property type="match status" value="1"/>
</dbReference>
<dbReference type="Pfam" id="PF04226">
    <property type="entry name" value="Transgly_assoc"/>
    <property type="match status" value="1"/>
</dbReference>
<feature type="chain" id="PRO_0000072420" description="UPF0410 protein YmgE">
    <location>
        <begin position="1"/>
        <end position="84"/>
    </location>
</feature>
<feature type="transmembrane region" description="Helical" evidence="1">
    <location>
        <begin position="1"/>
        <end position="21"/>
    </location>
</feature>
<feature type="transmembrane region" description="Helical" evidence="1">
    <location>
        <begin position="27"/>
        <end position="47"/>
    </location>
</feature>
<feature type="transmembrane region" description="Helical" evidence="1">
    <location>
        <begin position="58"/>
        <end position="78"/>
    </location>
</feature>
<sequence>MGIIAWIIFDLIAGIIAKLIMPGRDGGGFFLTCILGIVGAVVGGWLATMFGIGGSISGFNLHSFLVAVVGAILVLGIFRLLRRE</sequence>